<proteinExistence type="evidence at transcript level"/>
<reference key="1">
    <citation type="journal article" date="2005" name="BMC Genomics">
        <title>Characterization of 954 bovine full-CDS cDNA sequences.</title>
        <authorList>
            <person name="Harhay G.P."/>
            <person name="Sonstegard T.S."/>
            <person name="Keele J.W."/>
            <person name="Heaton M.P."/>
            <person name="Clawson M.L."/>
            <person name="Snelling W.M."/>
            <person name="Wiedmann R.T."/>
            <person name="Van Tassell C.P."/>
            <person name="Smith T.P.L."/>
        </authorList>
    </citation>
    <scope>NUCLEOTIDE SEQUENCE [LARGE SCALE MRNA]</scope>
</reference>
<reference key="2">
    <citation type="submission" date="2005-01" db="EMBL/GenBank/DDBJ databases">
        <title>Analysis of sequences obtained from constructed full-length bovine cDNA libraries.</title>
        <authorList>
            <person name="Yu J."/>
            <person name="Meng Y."/>
            <person name="Wang Z."/>
            <person name="Hansen C."/>
            <person name="Li C."/>
            <person name="Moore S.S."/>
        </authorList>
    </citation>
    <scope>NUCLEOTIDE SEQUENCE [LARGE SCALE MRNA]</scope>
    <source>
        <tissue>Lymphoid epithelium</tissue>
    </source>
</reference>
<reference key="3">
    <citation type="submission" date="2007-06" db="EMBL/GenBank/DDBJ databases">
        <authorList>
            <consortium name="NIH - Mammalian Gene Collection (MGC) project"/>
        </authorList>
    </citation>
    <scope>NUCLEOTIDE SEQUENCE [LARGE SCALE MRNA]</scope>
    <source>
        <strain>Hereford</strain>
        <tissue>Testis</tissue>
    </source>
</reference>
<organism>
    <name type="scientific">Bos taurus</name>
    <name type="common">Bovine</name>
    <dbReference type="NCBI Taxonomy" id="9913"/>
    <lineage>
        <taxon>Eukaryota</taxon>
        <taxon>Metazoa</taxon>
        <taxon>Chordata</taxon>
        <taxon>Craniata</taxon>
        <taxon>Vertebrata</taxon>
        <taxon>Euteleostomi</taxon>
        <taxon>Mammalia</taxon>
        <taxon>Eutheria</taxon>
        <taxon>Laurasiatheria</taxon>
        <taxon>Artiodactyla</taxon>
        <taxon>Ruminantia</taxon>
        <taxon>Pecora</taxon>
        <taxon>Bovidae</taxon>
        <taxon>Bovinae</taxon>
        <taxon>Bos</taxon>
    </lineage>
</organism>
<protein>
    <recommendedName>
        <fullName>Elongation factor 1-beta</fullName>
        <shortName>EF-1-beta</shortName>
    </recommendedName>
    <alternativeName>
        <fullName evidence="8">eEF-1B alpha</fullName>
    </alternativeName>
</protein>
<accession>Q5E983</accession>
<accession>A6QLF3</accession>
<accession>Q56JY7</accession>
<feature type="chain" id="PRO_0000155020" description="Elongation factor 1-beta">
    <location>
        <begin position="1"/>
        <end position="225"/>
    </location>
</feature>
<feature type="domain" description="GST C-terminal">
    <location>
        <begin position="2"/>
        <end position="90"/>
    </location>
</feature>
<feature type="region of interest" description="Disordered" evidence="7">
    <location>
        <begin position="78"/>
        <end position="115"/>
    </location>
</feature>
<feature type="compositionally biased region" description="Acidic residues" evidence="7">
    <location>
        <begin position="96"/>
        <end position="113"/>
    </location>
</feature>
<feature type="modified residue" description="N6-acetyllysine" evidence="4">
    <location>
        <position position="7"/>
    </location>
</feature>
<feature type="modified residue" description="Phosphoserine" evidence="4">
    <location>
        <position position="8"/>
    </location>
</feature>
<feature type="modified residue" description="Phosphoserine" evidence="4">
    <location>
        <position position="42"/>
    </location>
</feature>
<feature type="modified residue" description="Phosphothreonine" evidence="3">
    <location>
        <position position="88"/>
    </location>
</feature>
<feature type="modified residue" description="Phosphothreonine" evidence="4">
    <location>
        <position position="93"/>
    </location>
</feature>
<feature type="modified residue" description="Phosphoserine" evidence="4">
    <location>
        <position position="95"/>
    </location>
</feature>
<feature type="modified residue" description="Phosphoserine; by CK2" evidence="6">
    <location>
        <position position="106"/>
    </location>
</feature>
<feature type="modified residue" description="Phosphoserine" evidence="4">
    <location>
        <position position="174"/>
    </location>
</feature>
<feature type="cross-link" description="Glycyl lysine isopeptide (Lys-Gly) (interchain with G-Cter in SUMO2)" evidence="4">
    <location>
        <position position="147"/>
    </location>
</feature>
<feature type="sequence conflict" description="In Ref. 2; AAW82108." evidence="8" ref="2">
    <original>D</original>
    <variation>G</variation>
    <location>
        <position position="94"/>
    </location>
</feature>
<sequence>MGFGDLKSPAGLQVLNDYLADKSYIEGYVPSQADVAVFEAVSGPPPADLCHALRWYNHIKSYEKEKASLPGVKKALGKYGPANVEDTTESGATDSKDDDDIDLFGSDDEEESEEAKRLREERLAQYESKKAKKPALVAKSSILLDVKPWDDETDMAKLEECVRSIQADGLVWGSSKLVPVGYGIKKLQIQCVVEDDKVGTDMLEEQITAFDEYVQSMDVAAFNKI</sequence>
<comment type="function">
    <text evidence="5">Catalytic subunit of the guanine nucleotide exchange factor (GEF) (eEF1B subcomplex) of the eukaryotic elongation factor 1 complex (eEF1). Stimulates the exchange of GDP for GTP on elongation factor 1A (eEF1A), probably by displacing GDP from the nucleotide binding pocket in eEF1A.</text>
</comment>
<comment type="subunit">
    <text evidence="2 8">EF-1 is composed of 4 subunits: alpha, beta (alpha subunit of the eEF1B subcomplex), delta (beta subunit of the eEF1B subcomplex), and gamma (gamma subunit of the eEF1B subcomplex) (Probable). Interacts with elongation factor EEF1A1 (By similarity).</text>
</comment>
<comment type="PTM">
    <text evidence="1">Phosphorylation affects the GDP/GTP exchange rate.</text>
</comment>
<comment type="similarity">
    <text evidence="8">Belongs to the EF-1-beta/EF-1-delta family.</text>
</comment>
<dbReference type="EMBL" id="BT021037">
    <property type="protein sequence ID" value="AAX09054.1"/>
    <property type="molecule type" value="mRNA"/>
</dbReference>
<dbReference type="EMBL" id="AY911340">
    <property type="protein sequence ID" value="AAW82108.1"/>
    <property type="molecule type" value="mRNA"/>
</dbReference>
<dbReference type="EMBL" id="BC147944">
    <property type="protein sequence ID" value="AAI47945.1"/>
    <property type="molecule type" value="mRNA"/>
</dbReference>
<dbReference type="RefSeq" id="NP_001014936.1">
    <property type="nucleotide sequence ID" value="NM_001014936.1"/>
</dbReference>
<dbReference type="BMRB" id="Q5E983"/>
<dbReference type="SMR" id="Q5E983"/>
<dbReference type="FunCoup" id="Q5E983">
    <property type="interactions" value="3538"/>
</dbReference>
<dbReference type="STRING" id="9913.ENSBTAP00000058501"/>
<dbReference type="PaxDb" id="9913-ENSBTAP00000029304"/>
<dbReference type="PeptideAtlas" id="Q5E983"/>
<dbReference type="Ensembl" id="ENSBTAT00000029304.2">
    <property type="protein sequence ID" value="ENSBTAP00000029304.1"/>
    <property type="gene ID" value="ENSBTAG00000021979.5"/>
</dbReference>
<dbReference type="GeneID" id="520875"/>
<dbReference type="KEGG" id="bta:520875"/>
<dbReference type="CTD" id="1933"/>
<dbReference type="VEuPathDB" id="HostDB:ENSBTAG00000021979"/>
<dbReference type="VGNC" id="VGNC:54422">
    <property type="gene designation" value="EEF1B2"/>
</dbReference>
<dbReference type="eggNOG" id="KOG1668">
    <property type="taxonomic scope" value="Eukaryota"/>
</dbReference>
<dbReference type="GeneTree" id="ENSGT00950000183014"/>
<dbReference type="HOGENOM" id="CLU_050172_0_0_1"/>
<dbReference type="InParanoid" id="Q5E983"/>
<dbReference type="OMA" id="YRWYKHI"/>
<dbReference type="OrthoDB" id="331763at2759"/>
<dbReference type="TreeFam" id="TF313134"/>
<dbReference type="Reactome" id="R-BTA-156842">
    <property type="pathway name" value="Eukaryotic Translation Elongation"/>
</dbReference>
<dbReference type="Proteomes" id="UP000009136">
    <property type="component" value="Chromosome 2"/>
</dbReference>
<dbReference type="Bgee" id="ENSBTAG00000021979">
    <property type="expression patterns" value="Expressed in myometrium and 106 other cell types or tissues"/>
</dbReference>
<dbReference type="GO" id="GO:0005829">
    <property type="term" value="C:cytosol"/>
    <property type="evidence" value="ECO:0000318"/>
    <property type="project" value="GO_Central"/>
</dbReference>
<dbReference type="GO" id="GO:0005853">
    <property type="term" value="C:eukaryotic translation elongation factor 1 complex"/>
    <property type="evidence" value="ECO:0007669"/>
    <property type="project" value="InterPro"/>
</dbReference>
<dbReference type="GO" id="GO:0005085">
    <property type="term" value="F:guanyl-nucleotide exchange factor activity"/>
    <property type="evidence" value="ECO:0000318"/>
    <property type="project" value="GO_Central"/>
</dbReference>
<dbReference type="GO" id="GO:0003746">
    <property type="term" value="F:translation elongation factor activity"/>
    <property type="evidence" value="ECO:0007669"/>
    <property type="project" value="UniProtKB-KW"/>
</dbReference>
<dbReference type="GO" id="GO:0006414">
    <property type="term" value="P:translational elongation"/>
    <property type="evidence" value="ECO:0000318"/>
    <property type="project" value="GO_Central"/>
</dbReference>
<dbReference type="CDD" id="cd00292">
    <property type="entry name" value="EF1B"/>
    <property type="match status" value="1"/>
</dbReference>
<dbReference type="CDD" id="cd10308">
    <property type="entry name" value="GST_C_eEF1b_like"/>
    <property type="match status" value="1"/>
</dbReference>
<dbReference type="FunFam" id="3.30.70.60:FF:000001">
    <property type="entry name" value="Elongation factor 1-beta 1 like"/>
    <property type="match status" value="1"/>
</dbReference>
<dbReference type="FunFam" id="1.20.1050.130:FF:000001">
    <property type="entry name" value="Putative Elongation factor 1-beta"/>
    <property type="match status" value="1"/>
</dbReference>
<dbReference type="Gene3D" id="1.20.1050.130">
    <property type="match status" value="1"/>
</dbReference>
<dbReference type="Gene3D" id="3.30.70.60">
    <property type="match status" value="1"/>
</dbReference>
<dbReference type="InterPro" id="IPR036219">
    <property type="entry name" value="eEF-1beta-like_sf"/>
</dbReference>
<dbReference type="InterPro" id="IPR018940">
    <property type="entry name" value="EF-1_beta_acid_region_euk"/>
</dbReference>
<dbReference type="InterPro" id="IPR049720">
    <property type="entry name" value="EF1B_bsu/dsu"/>
</dbReference>
<dbReference type="InterPro" id="IPR014038">
    <property type="entry name" value="EF1B_bsu/dsu_GNE"/>
</dbReference>
<dbReference type="InterPro" id="IPR036282">
    <property type="entry name" value="Glutathione-S-Trfase_C_sf"/>
</dbReference>
<dbReference type="InterPro" id="IPR014717">
    <property type="entry name" value="Transl_elong_EF1B/ribsomal_bS6"/>
</dbReference>
<dbReference type="InterPro" id="IPR001326">
    <property type="entry name" value="Transl_elong_EF1B_B/D_CS"/>
</dbReference>
<dbReference type="PANTHER" id="PTHR11595">
    <property type="entry name" value="EF-HAND AND COILED-COIL DOMAIN-CONTAINING FAMILY MEMBER"/>
    <property type="match status" value="1"/>
</dbReference>
<dbReference type="PANTHER" id="PTHR11595:SF21">
    <property type="entry name" value="ELONGATION FACTOR 1-BETA"/>
    <property type="match status" value="1"/>
</dbReference>
<dbReference type="Pfam" id="PF10587">
    <property type="entry name" value="EF-1_beta_acid"/>
    <property type="match status" value="1"/>
</dbReference>
<dbReference type="Pfam" id="PF00736">
    <property type="entry name" value="EF1_GNE"/>
    <property type="match status" value="1"/>
</dbReference>
<dbReference type="SMART" id="SM01182">
    <property type="entry name" value="EF-1_beta_acid"/>
    <property type="match status" value="1"/>
</dbReference>
<dbReference type="SMART" id="SM00888">
    <property type="entry name" value="EF1_GNE"/>
    <property type="match status" value="1"/>
</dbReference>
<dbReference type="SUPFAM" id="SSF54984">
    <property type="entry name" value="eEF-1beta-like"/>
    <property type="match status" value="1"/>
</dbReference>
<dbReference type="SUPFAM" id="SSF47616">
    <property type="entry name" value="GST C-terminal domain-like"/>
    <property type="match status" value="1"/>
</dbReference>
<dbReference type="PROSITE" id="PS00824">
    <property type="entry name" value="EF1BD_1"/>
    <property type="match status" value="1"/>
</dbReference>
<dbReference type="PROSITE" id="PS00825">
    <property type="entry name" value="EF1BD_2"/>
    <property type="match status" value="1"/>
</dbReference>
<evidence type="ECO:0000250" key="1"/>
<evidence type="ECO:0000250" key="2">
    <source>
        <dbReference type="UniProtKB" id="A6IPG1"/>
    </source>
</evidence>
<evidence type="ECO:0000250" key="3">
    <source>
        <dbReference type="UniProtKB" id="O70251"/>
    </source>
</evidence>
<evidence type="ECO:0000250" key="4">
    <source>
        <dbReference type="UniProtKB" id="P24534"/>
    </source>
</evidence>
<evidence type="ECO:0000250" key="5">
    <source>
        <dbReference type="UniProtKB" id="P32471"/>
    </source>
</evidence>
<evidence type="ECO:0000250" key="6">
    <source>
        <dbReference type="UniProtKB" id="P34826"/>
    </source>
</evidence>
<evidence type="ECO:0000256" key="7">
    <source>
        <dbReference type="SAM" id="MobiDB-lite"/>
    </source>
</evidence>
<evidence type="ECO:0000305" key="8"/>
<keyword id="KW-0007">Acetylation</keyword>
<keyword id="KW-0251">Elongation factor</keyword>
<keyword id="KW-1017">Isopeptide bond</keyword>
<keyword id="KW-0597">Phosphoprotein</keyword>
<keyword id="KW-0648">Protein biosynthesis</keyword>
<keyword id="KW-1185">Reference proteome</keyword>
<keyword id="KW-0832">Ubl conjugation</keyword>
<gene>
    <name type="primary">EEF1B</name>
</gene>
<name>EF1B_BOVIN</name>